<feature type="peptide" id="PRO_0000366108" description="Peptide 7629">
    <location>
        <begin position="1"/>
        <end position="15" status="greater than"/>
    </location>
</feature>
<feature type="non-terminal residue">
    <location>
        <position position="15"/>
    </location>
</feature>
<organism>
    <name type="scientific">Tityus stigmurus</name>
    <name type="common">Brazilian scorpion</name>
    <dbReference type="NCBI Taxonomy" id="50344"/>
    <lineage>
        <taxon>Eukaryota</taxon>
        <taxon>Metazoa</taxon>
        <taxon>Ecdysozoa</taxon>
        <taxon>Arthropoda</taxon>
        <taxon>Chelicerata</taxon>
        <taxon>Arachnida</taxon>
        <taxon>Scorpiones</taxon>
        <taxon>Buthida</taxon>
        <taxon>Buthoidea</taxon>
        <taxon>Buthidae</taxon>
        <taxon>Tityus</taxon>
    </lineage>
</organism>
<keyword id="KW-0903">Direct protein sequencing</keyword>
<keyword id="KW-0964">Secreted</keyword>
<proteinExistence type="evidence at protein level"/>
<dbReference type="GO" id="GO:0005576">
    <property type="term" value="C:extracellular region"/>
    <property type="evidence" value="ECO:0007669"/>
    <property type="project" value="UniProtKB-SubCell"/>
</dbReference>
<name>P7629_TITST</name>
<reference key="1">
    <citation type="journal article" date="2007" name="Comp. Biochem. Physiol.">
        <title>Proteomic analysis of the venom from the scorpion Tityus stigmurus: biochemical and physiological comparison with other Tityus species.</title>
        <authorList>
            <person name="Batista C.V.F."/>
            <person name="Roman-Gonzalez S.A."/>
            <person name="Salas-Castillo S.P."/>
            <person name="Zamudio F.Z."/>
            <person name="Gomez-Lagunas F."/>
            <person name="Possani L.D."/>
        </authorList>
    </citation>
    <scope>PROTEIN SEQUENCE</scope>
    <scope>MASS SPECTROMETRY</scope>
    <source>
        <tissue>Venom</tissue>
    </source>
</reference>
<comment type="subcellular location">
    <subcellularLocation>
        <location>Secreted</location>
    </subcellularLocation>
</comment>
<comment type="tissue specificity">
    <text>Expressed by the venom gland.</text>
</comment>
<comment type="mass spectrometry"/>
<evidence type="ECO:0000269" key="1">
    <source>
    </source>
</evidence>
<sequence>TKCPTCQNDTCSNKI</sequence>
<protein>
    <recommendedName>
        <fullName>Peptide 7629</fullName>
    </recommendedName>
</protein>
<accession>P0C8X0</accession>